<dbReference type="EMBL" id="CP000227">
    <property type="protein sequence ID" value="ACM10782.1"/>
    <property type="molecule type" value="Genomic_DNA"/>
</dbReference>
<dbReference type="SMR" id="B9J1G9"/>
<dbReference type="KEGG" id="bcq:BCQ_0295"/>
<dbReference type="HOGENOM" id="CLU_061534_1_1_9"/>
<dbReference type="Proteomes" id="UP000000441">
    <property type="component" value="Chromosome"/>
</dbReference>
<dbReference type="GO" id="GO:0005737">
    <property type="term" value="C:cytoplasm"/>
    <property type="evidence" value="ECO:0007669"/>
    <property type="project" value="UniProtKB-SubCell"/>
</dbReference>
<dbReference type="GO" id="GO:0003677">
    <property type="term" value="F:DNA binding"/>
    <property type="evidence" value="ECO:0007669"/>
    <property type="project" value="UniProtKB-UniRule"/>
</dbReference>
<dbReference type="GO" id="GO:0003700">
    <property type="term" value="F:DNA-binding transcription factor activity"/>
    <property type="evidence" value="ECO:0007669"/>
    <property type="project" value="UniProtKB-UniRule"/>
</dbReference>
<dbReference type="GO" id="GO:0045892">
    <property type="term" value="P:negative regulation of DNA-templated transcription"/>
    <property type="evidence" value="ECO:0007669"/>
    <property type="project" value="InterPro"/>
</dbReference>
<dbReference type="GO" id="GO:0051775">
    <property type="term" value="P:response to redox state"/>
    <property type="evidence" value="ECO:0007669"/>
    <property type="project" value="InterPro"/>
</dbReference>
<dbReference type="Gene3D" id="3.40.50.720">
    <property type="entry name" value="NAD(P)-binding Rossmann-like Domain"/>
    <property type="match status" value="1"/>
</dbReference>
<dbReference type="Gene3D" id="1.10.10.10">
    <property type="entry name" value="Winged helix-like DNA-binding domain superfamily/Winged helix DNA-binding domain"/>
    <property type="match status" value="1"/>
</dbReference>
<dbReference type="HAMAP" id="MF_01131">
    <property type="entry name" value="Rex"/>
    <property type="match status" value="1"/>
</dbReference>
<dbReference type="InterPro" id="IPR003781">
    <property type="entry name" value="CoA-bd"/>
</dbReference>
<dbReference type="InterPro" id="IPR036291">
    <property type="entry name" value="NAD(P)-bd_dom_sf"/>
</dbReference>
<dbReference type="InterPro" id="IPR009718">
    <property type="entry name" value="Rex_DNA-bd_C_dom"/>
</dbReference>
<dbReference type="InterPro" id="IPR022876">
    <property type="entry name" value="Tscrpt_rep_Rex"/>
</dbReference>
<dbReference type="InterPro" id="IPR036388">
    <property type="entry name" value="WH-like_DNA-bd_sf"/>
</dbReference>
<dbReference type="InterPro" id="IPR036390">
    <property type="entry name" value="WH_DNA-bd_sf"/>
</dbReference>
<dbReference type="NCBIfam" id="NF003989">
    <property type="entry name" value="PRK05472.1-3"/>
    <property type="match status" value="1"/>
</dbReference>
<dbReference type="NCBIfam" id="NF003991">
    <property type="entry name" value="PRK05472.1-5"/>
    <property type="match status" value="1"/>
</dbReference>
<dbReference type="NCBIfam" id="NF003994">
    <property type="entry name" value="PRK05472.2-3"/>
    <property type="match status" value="1"/>
</dbReference>
<dbReference type="NCBIfam" id="NF003995">
    <property type="entry name" value="PRK05472.2-4"/>
    <property type="match status" value="1"/>
</dbReference>
<dbReference type="NCBIfam" id="NF003996">
    <property type="entry name" value="PRK05472.2-5"/>
    <property type="match status" value="1"/>
</dbReference>
<dbReference type="PANTHER" id="PTHR35786">
    <property type="entry name" value="REDOX-SENSING TRANSCRIPTIONAL REPRESSOR REX"/>
    <property type="match status" value="1"/>
</dbReference>
<dbReference type="PANTHER" id="PTHR35786:SF1">
    <property type="entry name" value="REDOX-SENSING TRANSCRIPTIONAL REPRESSOR REX 1"/>
    <property type="match status" value="1"/>
</dbReference>
<dbReference type="Pfam" id="PF02629">
    <property type="entry name" value="CoA_binding"/>
    <property type="match status" value="1"/>
</dbReference>
<dbReference type="Pfam" id="PF06971">
    <property type="entry name" value="Put_DNA-bind_N"/>
    <property type="match status" value="1"/>
</dbReference>
<dbReference type="SMART" id="SM00881">
    <property type="entry name" value="CoA_binding"/>
    <property type="match status" value="1"/>
</dbReference>
<dbReference type="SUPFAM" id="SSF51735">
    <property type="entry name" value="NAD(P)-binding Rossmann-fold domains"/>
    <property type="match status" value="1"/>
</dbReference>
<dbReference type="SUPFAM" id="SSF46785">
    <property type="entry name" value="Winged helix' DNA-binding domain"/>
    <property type="match status" value="1"/>
</dbReference>
<name>REX_BACCQ</name>
<keyword id="KW-0963">Cytoplasm</keyword>
<keyword id="KW-0238">DNA-binding</keyword>
<keyword id="KW-0520">NAD</keyword>
<keyword id="KW-0678">Repressor</keyword>
<keyword id="KW-0804">Transcription</keyword>
<keyword id="KW-0805">Transcription regulation</keyword>
<comment type="function">
    <text evidence="1">Modulates transcription in response to changes in cellular NADH/NAD(+) redox state.</text>
</comment>
<comment type="subunit">
    <text evidence="1">Homodimer.</text>
</comment>
<comment type="subcellular location">
    <subcellularLocation>
        <location evidence="1">Cytoplasm</location>
    </subcellularLocation>
</comment>
<comment type="similarity">
    <text evidence="1">Belongs to the transcriptional regulatory Rex family.</text>
</comment>
<proteinExistence type="inferred from homology"/>
<accession>B9J1G9</accession>
<reference key="1">
    <citation type="journal article" date="2009" name="J. Bacteriol.">
        <title>Complete genome sequence of the extremophilic Bacillus cereus strain Q1 with industrial applications.</title>
        <authorList>
            <person name="Xiong Z."/>
            <person name="Jiang Y."/>
            <person name="Qi D."/>
            <person name="Lu H."/>
            <person name="Yang F."/>
            <person name="Yang J."/>
            <person name="Chen L."/>
            <person name="Sun L."/>
            <person name="Xu X."/>
            <person name="Xue Y."/>
            <person name="Zhu Y."/>
            <person name="Jin Q."/>
        </authorList>
    </citation>
    <scope>NUCLEOTIDE SEQUENCE [LARGE SCALE GENOMIC DNA]</scope>
    <source>
        <strain>Q1</strain>
    </source>
</reference>
<gene>
    <name evidence="1" type="primary">rex</name>
    <name type="ordered locus">BCQ_0295</name>
</gene>
<feature type="chain" id="PRO_1000164078" description="Redox-sensing transcriptional repressor Rex">
    <location>
        <begin position="1"/>
        <end position="209"/>
    </location>
</feature>
<feature type="DNA-binding region" description="H-T-H motif" evidence="1">
    <location>
        <begin position="16"/>
        <end position="55"/>
    </location>
</feature>
<feature type="binding site" evidence="1">
    <location>
        <begin position="90"/>
        <end position="95"/>
    </location>
    <ligand>
        <name>NAD(+)</name>
        <dbReference type="ChEBI" id="CHEBI:57540"/>
    </ligand>
</feature>
<evidence type="ECO:0000255" key="1">
    <source>
        <dbReference type="HAMAP-Rule" id="MF_01131"/>
    </source>
</evidence>
<organism>
    <name type="scientific">Bacillus cereus (strain Q1)</name>
    <dbReference type="NCBI Taxonomy" id="361100"/>
    <lineage>
        <taxon>Bacteria</taxon>
        <taxon>Bacillati</taxon>
        <taxon>Bacillota</taxon>
        <taxon>Bacilli</taxon>
        <taxon>Bacillales</taxon>
        <taxon>Bacillaceae</taxon>
        <taxon>Bacillus</taxon>
        <taxon>Bacillus cereus group</taxon>
    </lineage>
</organism>
<protein>
    <recommendedName>
        <fullName evidence="1">Redox-sensing transcriptional repressor Rex</fullName>
    </recommendedName>
</protein>
<sequence>MEQQKIPQATAKRLPLYYRFIQNLSLSGKQRVSSAELSEAVKVDSATIRRDFSYFGALGKKGYGYNVNYLLSFFRETLDQDDITRVALIGVGNLGTAFLHYNFTKNNNTKIEMAFDISEEKVGTEIGGIPVYHLDELEERLSSDIQVAILTVPATVAQSVADRLAETNVHGILNFTPARLNVSDNIRIHHIDLAVELQTLVYFLKNYPQ</sequence>